<name>TPS1_EMENI</name>
<dbReference type="EC" id="2.4.1.15" evidence="1"/>
<dbReference type="EMBL" id="AF043230">
    <property type="protein sequence ID" value="AAC18060.1"/>
    <property type="molecule type" value="Genomic_DNA"/>
</dbReference>
<dbReference type="EMBL" id="AACD01000094">
    <property type="protein sequence ID" value="EAA62683.1"/>
    <property type="molecule type" value="Genomic_DNA"/>
</dbReference>
<dbReference type="EMBL" id="BN001305">
    <property type="protein sequence ID" value="CBF81745.1"/>
    <property type="molecule type" value="Genomic_DNA"/>
</dbReference>
<dbReference type="RefSeq" id="XP_663127.1">
    <property type="nucleotide sequence ID" value="XM_658035.1"/>
</dbReference>
<dbReference type="SMR" id="O59921"/>
<dbReference type="FunCoup" id="O59921">
    <property type="interactions" value="568"/>
</dbReference>
<dbReference type="STRING" id="227321.O59921"/>
<dbReference type="CAZy" id="GT20">
    <property type="family name" value="Glycosyltransferase Family 20"/>
</dbReference>
<dbReference type="EnsemblFungi" id="CBF81745">
    <property type="protein sequence ID" value="CBF81745"/>
    <property type="gene ID" value="ANIA_05523"/>
</dbReference>
<dbReference type="KEGG" id="ani:ANIA_05523"/>
<dbReference type="VEuPathDB" id="FungiDB:AN5523"/>
<dbReference type="eggNOG" id="KOG1050">
    <property type="taxonomic scope" value="Eukaryota"/>
</dbReference>
<dbReference type="HOGENOM" id="CLU_002351_7_2_1"/>
<dbReference type="InParanoid" id="O59921"/>
<dbReference type="OMA" id="NRTIWPL"/>
<dbReference type="OrthoDB" id="755951at2759"/>
<dbReference type="Proteomes" id="UP000000560">
    <property type="component" value="Chromosome V"/>
</dbReference>
<dbReference type="GO" id="GO:0005946">
    <property type="term" value="C:alpha,alpha-trehalose-phosphate synthase complex (UDP-forming)"/>
    <property type="evidence" value="ECO:0000250"/>
    <property type="project" value="AspGD"/>
</dbReference>
<dbReference type="GO" id="GO:0003825">
    <property type="term" value="F:alpha,alpha-trehalose-phosphate synthase (UDP-forming) activity"/>
    <property type="evidence" value="ECO:0000315"/>
    <property type="project" value="AspGD"/>
</dbReference>
<dbReference type="GO" id="GO:0005975">
    <property type="term" value="P:carbohydrate metabolic process"/>
    <property type="evidence" value="ECO:0000315"/>
    <property type="project" value="AspGD"/>
</dbReference>
<dbReference type="GO" id="GO:0034605">
    <property type="term" value="P:cellular response to heat"/>
    <property type="evidence" value="ECO:0000314"/>
    <property type="project" value="AspGD"/>
</dbReference>
<dbReference type="GO" id="GO:0070301">
    <property type="term" value="P:cellular response to hydrogen peroxide"/>
    <property type="evidence" value="ECO:0000314"/>
    <property type="project" value="AspGD"/>
</dbReference>
<dbReference type="GO" id="GO:0005992">
    <property type="term" value="P:trehalose biosynthetic process"/>
    <property type="evidence" value="ECO:0000315"/>
    <property type="project" value="AspGD"/>
</dbReference>
<dbReference type="CDD" id="cd03788">
    <property type="entry name" value="GT20_TPS"/>
    <property type="match status" value="1"/>
</dbReference>
<dbReference type="FunFam" id="3.40.50.2000:FF:000007">
    <property type="entry name" value="Trehalose-6-phosphate synthase"/>
    <property type="match status" value="1"/>
</dbReference>
<dbReference type="FunFam" id="3.40.50.2000:FF:000035">
    <property type="entry name" value="Trehalose-6-phosphate synthase"/>
    <property type="match status" value="1"/>
</dbReference>
<dbReference type="Gene3D" id="3.40.50.2000">
    <property type="entry name" value="Glycogen Phosphorylase B"/>
    <property type="match status" value="2"/>
</dbReference>
<dbReference type="InterPro" id="IPR001830">
    <property type="entry name" value="Glyco_trans_20"/>
</dbReference>
<dbReference type="InterPro" id="IPR012766">
    <property type="entry name" value="Trehalose_OtsA"/>
</dbReference>
<dbReference type="NCBIfam" id="TIGR02400">
    <property type="entry name" value="trehalose_OtsA"/>
    <property type="match status" value="1"/>
</dbReference>
<dbReference type="PANTHER" id="PTHR10788:SF106">
    <property type="entry name" value="BCDNA.GH08860"/>
    <property type="match status" value="1"/>
</dbReference>
<dbReference type="PANTHER" id="PTHR10788">
    <property type="entry name" value="TREHALOSE-6-PHOSPHATE SYNTHASE"/>
    <property type="match status" value="1"/>
</dbReference>
<dbReference type="Pfam" id="PF00982">
    <property type="entry name" value="Glyco_transf_20"/>
    <property type="match status" value="1"/>
</dbReference>
<dbReference type="SUPFAM" id="SSF53756">
    <property type="entry name" value="UDP-Glycosyltransferase/glycogen phosphorylase"/>
    <property type="match status" value="1"/>
</dbReference>
<sequence>MPGVEKSSQNESRLLLVSNRLPITIKRSEDGKYDFSMSSGGLVSGLSGLSKTTTFQWYGWPGLEVPEEEIPTLKNRLKEEYNAIPVFIDDELADRHYNGFSNSILWPLFHYHPGEITFDESAWEAYKEANRLFAQAVASQVQDGDLIWVHDYHLMLLPEMLREEIGNTKKNIKIGFFLHTPFPSSEIYRILPVRNELLLGLLHCDLIGFHTYDYTRHFLSACSRLLGLPTTPNGIEFQGKIIACGAFPIGIDPEKFKEGLKKEKVQKRIATLEQKFQGVKLMVGVDRLDYIKGVPQKLHALEVFLSDHPEWVGKVVLVQVAVPSRQDVEEYQNLRAVVNELVGRINGKFGTVEFMPIHFLHKSVNFDELIALYAVSDACVVSSTRDGMNLVSYEYIATQEKRHGSLVLSEFAGAAQSLNGSIIVNPWNTEELAAAYHEAVTMSDEQRALNFSKLDKYVNKYTSAFWGQSFVTELTRISEQAAGKLPTKETPVNGETSKLETSSQ</sequence>
<feature type="chain" id="PRO_0000122497" description="Alpha,alpha-trehalose-phosphate synthase [UDP-forming]">
    <location>
        <begin position="1"/>
        <end position="504"/>
    </location>
</feature>
<feature type="region of interest" description="Disordered" evidence="3">
    <location>
        <begin position="482"/>
        <end position="504"/>
    </location>
</feature>
<feature type="compositionally biased region" description="Polar residues" evidence="3">
    <location>
        <begin position="493"/>
        <end position="504"/>
    </location>
</feature>
<feature type="binding site" evidence="2">
    <location>
        <position position="97"/>
    </location>
    <ligand>
        <name>D-glucose 6-phosphate</name>
        <dbReference type="ChEBI" id="CHEBI:61548"/>
    </ligand>
</feature>
<feature type="binding site" evidence="2">
    <location>
        <position position="151"/>
    </location>
    <ligand>
        <name>D-glucose 6-phosphate</name>
        <dbReference type="ChEBI" id="CHEBI:61548"/>
    </ligand>
</feature>
<feature type="binding site" evidence="2">
    <location>
        <position position="287"/>
    </location>
    <ligand>
        <name>UDP</name>
        <dbReference type="ChEBI" id="CHEBI:58223"/>
    </ligand>
</feature>
<feature type="binding site" evidence="2">
    <location>
        <position position="287"/>
    </location>
    <ligand>
        <name>UDP-alpha-D-glucose</name>
        <dbReference type="ChEBI" id="CHEBI:58885"/>
    </ligand>
</feature>
<feature type="binding site" evidence="2">
    <location>
        <position position="292"/>
    </location>
    <ligand>
        <name>UDP</name>
        <dbReference type="ChEBI" id="CHEBI:58223"/>
    </ligand>
</feature>
<feature type="binding site" evidence="2">
    <location>
        <position position="292"/>
    </location>
    <ligand>
        <name>UDP-alpha-D-glucose</name>
        <dbReference type="ChEBI" id="CHEBI:58885"/>
    </ligand>
</feature>
<feature type="binding site" evidence="2">
    <location>
        <position position="325"/>
    </location>
    <ligand>
        <name>D-glucose 6-phosphate</name>
        <dbReference type="ChEBI" id="CHEBI:61548"/>
    </ligand>
</feature>
<feature type="binding site" evidence="2">
    <location>
        <begin position="386"/>
        <end position="394"/>
    </location>
    <ligand>
        <name>UDP-alpha-D-glucose</name>
        <dbReference type="ChEBI" id="CHEBI:58885"/>
    </ligand>
</feature>
<feature type="binding site" evidence="2">
    <location>
        <begin position="390"/>
        <end position="394"/>
    </location>
    <ligand>
        <name>UDP</name>
        <dbReference type="ChEBI" id="CHEBI:58223"/>
    </ligand>
</feature>
<comment type="function">
    <text evidence="1">Synthase catalytic subunit of the trehalose synthase complex that catalyzes the production of trehalose from glucose-6-phosphate and UDP-alpha-D-glucose in a two step process.</text>
</comment>
<comment type="catalytic activity">
    <reaction evidence="1">
        <text>D-glucose 6-phosphate + UDP-alpha-D-glucose = alpha,alpha-trehalose 6-phosphate + UDP + H(+)</text>
        <dbReference type="Rhea" id="RHEA:18889"/>
        <dbReference type="ChEBI" id="CHEBI:15378"/>
        <dbReference type="ChEBI" id="CHEBI:58223"/>
        <dbReference type="ChEBI" id="CHEBI:58429"/>
        <dbReference type="ChEBI" id="CHEBI:58885"/>
        <dbReference type="ChEBI" id="CHEBI:61548"/>
        <dbReference type="EC" id="2.4.1.15"/>
    </reaction>
</comment>
<comment type="pathway">
    <text evidence="4">Carbohydrate biosynthesis.</text>
</comment>
<comment type="similarity">
    <text evidence="4">Belongs to the glycosyltransferase 20 family.</text>
</comment>
<accession>O59921</accession>
<accession>C8VG92</accession>
<accession>Q5B1Q7</accession>
<keyword id="KW-0328">Glycosyltransferase</keyword>
<keyword id="KW-1185">Reference proteome</keyword>
<keyword id="KW-0808">Transferase</keyword>
<proteinExistence type="inferred from homology"/>
<evidence type="ECO:0000250" key="1">
    <source>
        <dbReference type="UniProtKB" id="Q00764"/>
    </source>
</evidence>
<evidence type="ECO:0000250" key="2">
    <source>
        <dbReference type="UniProtKB" id="Q92410"/>
    </source>
</evidence>
<evidence type="ECO:0000256" key="3">
    <source>
        <dbReference type="SAM" id="MobiDB-lite"/>
    </source>
</evidence>
<evidence type="ECO:0000305" key="4"/>
<reference key="1">
    <citation type="submission" date="1998-01" db="EMBL/GenBank/DDBJ databases">
        <title>Characterization of the Aspergillus nidulans tpsA gene encoding trehalose-6-phosphate synthase.</title>
        <authorList>
            <person name="d'Enfert C."/>
            <person name="Wolschek M."/>
            <person name="Kubicek C."/>
        </authorList>
    </citation>
    <scope>NUCLEOTIDE SEQUENCE [GENOMIC DNA]</scope>
</reference>
<reference key="2">
    <citation type="journal article" date="2005" name="Nature">
        <title>Sequencing of Aspergillus nidulans and comparative analysis with A. fumigatus and A. oryzae.</title>
        <authorList>
            <person name="Galagan J.E."/>
            <person name="Calvo S.E."/>
            <person name="Cuomo C."/>
            <person name="Ma L.-J."/>
            <person name="Wortman J.R."/>
            <person name="Batzoglou S."/>
            <person name="Lee S.-I."/>
            <person name="Bastuerkmen M."/>
            <person name="Spevak C.C."/>
            <person name="Clutterbuck J."/>
            <person name="Kapitonov V."/>
            <person name="Jurka J."/>
            <person name="Scazzocchio C."/>
            <person name="Farman M.L."/>
            <person name="Butler J."/>
            <person name="Purcell S."/>
            <person name="Harris S."/>
            <person name="Braus G.H."/>
            <person name="Draht O."/>
            <person name="Busch S."/>
            <person name="D'Enfert C."/>
            <person name="Bouchier C."/>
            <person name="Goldman G.H."/>
            <person name="Bell-Pedersen D."/>
            <person name="Griffiths-Jones S."/>
            <person name="Doonan J.H."/>
            <person name="Yu J."/>
            <person name="Vienken K."/>
            <person name="Pain A."/>
            <person name="Freitag M."/>
            <person name="Selker E.U."/>
            <person name="Archer D.B."/>
            <person name="Penalva M.A."/>
            <person name="Oakley B.R."/>
            <person name="Momany M."/>
            <person name="Tanaka T."/>
            <person name="Kumagai T."/>
            <person name="Asai K."/>
            <person name="Machida M."/>
            <person name="Nierman W.C."/>
            <person name="Denning D.W."/>
            <person name="Caddick M.X."/>
            <person name="Hynes M."/>
            <person name="Paoletti M."/>
            <person name="Fischer R."/>
            <person name="Miller B.L."/>
            <person name="Dyer P.S."/>
            <person name="Sachs M.S."/>
            <person name="Osmani S.A."/>
            <person name="Birren B.W."/>
        </authorList>
    </citation>
    <scope>NUCLEOTIDE SEQUENCE [LARGE SCALE GENOMIC DNA]</scope>
    <source>
        <strain>FGSC A4 / ATCC 38163 / CBS 112.46 / NRRL 194 / M139</strain>
    </source>
</reference>
<reference key="3">
    <citation type="journal article" date="2009" name="Fungal Genet. Biol.">
        <title>The 2008 update of the Aspergillus nidulans genome annotation: a community effort.</title>
        <authorList>
            <person name="Wortman J.R."/>
            <person name="Gilsenan J.M."/>
            <person name="Joardar V."/>
            <person name="Deegan J."/>
            <person name="Clutterbuck J."/>
            <person name="Andersen M.R."/>
            <person name="Archer D."/>
            <person name="Bencina M."/>
            <person name="Braus G."/>
            <person name="Coutinho P."/>
            <person name="von Dohren H."/>
            <person name="Doonan J."/>
            <person name="Driessen A.J."/>
            <person name="Durek P."/>
            <person name="Espeso E."/>
            <person name="Fekete E."/>
            <person name="Flipphi M."/>
            <person name="Estrada C.G."/>
            <person name="Geysens S."/>
            <person name="Goldman G."/>
            <person name="de Groot P.W."/>
            <person name="Hansen K."/>
            <person name="Harris S.D."/>
            <person name="Heinekamp T."/>
            <person name="Helmstaedt K."/>
            <person name="Henrissat B."/>
            <person name="Hofmann G."/>
            <person name="Homan T."/>
            <person name="Horio T."/>
            <person name="Horiuchi H."/>
            <person name="James S."/>
            <person name="Jones M."/>
            <person name="Karaffa L."/>
            <person name="Karanyi Z."/>
            <person name="Kato M."/>
            <person name="Keller N."/>
            <person name="Kelly D.E."/>
            <person name="Kiel J.A."/>
            <person name="Kim J.M."/>
            <person name="van der Klei I.J."/>
            <person name="Klis F.M."/>
            <person name="Kovalchuk A."/>
            <person name="Krasevec N."/>
            <person name="Kubicek C.P."/>
            <person name="Liu B."/>
            <person name="Maccabe A."/>
            <person name="Meyer V."/>
            <person name="Mirabito P."/>
            <person name="Miskei M."/>
            <person name="Mos M."/>
            <person name="Mullins J."/>
            <person name="Nelson D.R."/>
            <person name="Nielsen J."/>
            <person name="Oakley B.R."/>
            <person name="Osmani S.A."/>
            <person name="Pakula T."/>
            <person name="Paszewski A."/>
            <person name="Paulsen I."/>
            <person name="Pilsyk S."/>
            <person name="Pocsi I."/>
            <person name="Punt P.J."/>
            <person name="Ram A.F."/>
            <person name="Ren Q."/>
            <person name="Robellet X."/>
            <person name="Robson G."/>
            <person name="Seiboth B."/>
            <person name="van Solingen P."/>
            <person name="Specht T."/>
            <person name="Sun J."/>
            <person name="Taheri-Talesh N."/>
            <person name="Takeshita N."/>
            <person name="Ussery D."/>
            <person name="vanKuyk P.A."/>
            <person name="Visser H."/>
            <person name="van de Vondervoort P.J."/>
            <person name="de Vries R.P."/>
            <person name="Walton J."/>
            <person name="Xiang X."/>
            <person name="Xiong Y."/>
            <person name="Zeng A.P."/>
            <person name="Brandt B.W."/>
            <person name="Cornell M.J."/>
            <person name="van den Hondel C.A."/>
            <person name="Visser J."/>
            <person name="Oliver S.G."/>
            <person name="Turner G."/>
        </authorList>
    </citation>
    <scope>GENOME REANNOTATION</scope>
    <source>
        <strain>FGSC A4 / ATCC 38163 / CBS 112.46 / NRRL 194 / M139</strain>
    </source>
</reference>
<protein>
    <recommendedName>
        <fullName>Alpha,alpha-trehalose-phosphate synthase [UDP-forming]</fullName>
        <ecNumber evidence="1">2.4.1.15</ecNumber>
    </recommendedName>
    <alternativeName>
        <fullName>Trehalose-6-phosphate synthase</fullName>
    </alternativeName>
    <alternativeName>
        <fullName>UDP-glucose-glucosephosphate glucosyltransferase</fullName>
    </alternativeName>
</protein>
<gene>
    <name type="primary">tpsA</name>
    <name type="ORF">AN5523</name>
</gene>
<organism>
    <name type="scientific">Emericella nidulans (strain FGSC A4 / ATCC 38163 / CBS 112.46 / NRRL 194 / M139)</name>
    <name type="common">Aspergillus nidulans</name>
    <dbReference type="NCBI Taxonomy" id="227321"/>
    <lineage>
        <taxon>Eukaryota</taxon>
        <taxon>Fungi</taxon>
        <taxon>Dikarya</taxon>
        <taxon>Ascomycota</taxon>
        <taxon>Pezizomycotina</taxon>
        <taxon>Eurotiomycetes</taxon>
        <taxon>Eurotiomycetidae</taxon>
        <taxon>Eurotiales</taxon>
        <taxon>Aspergillaceae</taxon>
        <taxon>Aspergillus</taxon>
        <taxon>Aspergillus subgen. Nidulantes</taxon>
    </lineage>
</organism>